<feature type="chain" id="PRO_0000265592" description="Transcription antitermination protein NusB">
    <location>
        <begin position="1"/>
        <end position="139"/>
    </location>
</feature>
<proteinExistence type="inferred from homology"/>
<comment type="function">
    <text evidence="1">Involved in transcription antitermination. Required for transcription of ribosomal RNA (rRNA) genes. Binds specifically to the boxA antiterminator sequence of the ribosomal RNA (rrn) operons.</text>
</comment>
<comment type="similarity">
    <text evidence="1">Belongs to the NusB family.</text>
</comment>
<keyword id="KW-0694">RNA-binding</keyword>
<keyword id="KW-0804">Transcription</keyword>
<keyword id="KW-0889">Transcription antitermination</keyword>
<keyword id="KW-0805">Transcription regulation</keyword>
<name>NUSB_SHIBS</name>
<reference key="1">
    <citation type="journal article" date="2005" name="Nucleic Acids Res.">
        <title>Genome dynamics and diversity of Shigella species, the etiologic agents of bacillary dysentery.</title>
        <authorList>
            <person name="Yang F."/>
            <person name="Yang J."/>
            <person name="Zhang X."/>
            <person name="Chen L."/>
            <person name="Jiang Y."/>
            <person name="Yan Y."/>
            <person name="Tang X."/>
            <person name="Wang J."/>
            <person name="Xiong Z."/>
            <person name="Dong J."/>
            <person name="Xue Y."/>
            <person name="Zhu Y."/>
            <person name="Xu X."/>
            <person name="Sun L."/>
            <person name="Chen S."/>
            <person name="Nie H."/>
            <person name="Peng J."/>
            <person name="Xu J."/>
            <person name="Wang Y."/>
            <person name="Yuan Z."/>
            <person name="Wen Y."/>
            <person name="Yao Z."/>
            <person name="Shen Y."/>
            <person name="Qiang B."/>
            <person name="Hou Y."/>
            <person name="Yu J."/>
            <person name="Jin Q."/>
        </authorList>
    </citation>
    <scope>NUCLEOTIDE SEQUENCE [LARGE SCALE GENOMIC DNA]</scope>
    <source>
        <strain>Sb227</strain>
    </source>
</reference>
<accession>Q325I5</accession>
<gene>
    <name evidence="1" type="primary">nusB</name>
    <name type="ordered locus">SBO_0310</name>
</gene>
<protein>
    <recommendedName>
        <fullName evidence="1">Transcription antitermination protein NusB</fullName>
    </recommendedName>
    <alternativeName>
        <fullName evidence="1">Antitermination factor NusB</fullName>
    </alternativeName>
</protein>
<dbReference type="EMBL" id="CP000036">
    <property type="protein sequence ID" value="ABB65023.1"/>
    <property type="molecule type" value="Genomic_DNA"/>
</dbReference>
<dbReference type="RefSeq" id="WP_000801125.1">
    <property type="nucleotide sequence ID" value="NC_007613.1"/>
</dbReference>
<dbReference type="SMR" id="Q325I5"/>
<dbReference type="GeneID" id="93777044"/>
<dbReference type="KEGG" id="sbo:SBO_0310"/>
<dbReference type="HOGENOM" id="CLU_087843_4_1_6"/>
<dbReference type="Proteomes" id="UP000007067">
    <property type="component" value="Chromosome"/>
</dbReference>
<dbReference type="GO" id="GO:0005829">
    <property type="term" value="C:cytosol"/>
    <property type="evidence" value="ECO:0007669"/>
    <property type="project" value="TreeGrafter"/>
</dbReference>
<dbReference type="GO" id="GO:0003723">
    <property type="term" value="F:RNA binding"/>
    <property type="evidence" value="ECO:0007669"/>
    <property type="project" value="UniProtKB-UniRule"/>
</dbReference>
<dbReference type="GO" id="GO:0006353">
    <property type="term" value="P:DNA-templated transcription termination"/>
    <property type="evidence" value="ECO:0007669"/>
    <property type="project" value="UniProtKB-UniRule"/>
</dbReference>
<dbReference type="GO" id="GO:0031564">
    <property type="term" value="P:transcription antitermination"/>
    <property type="evidence" value="ECO:0007669"/>
    <property type="project" value="UniProtKB-KW"/>
</dbReference>
<dbReference type="CDD" id="cd00619">
    <property type="entry name" value="Terminator_NusB"/>
    <property type="match status" value="1"/>
</dbReference>
<dbReference type="FunFam" id="1.10.940.10:FF:000001">
    <property type="entry name" value="Transcription antitermination factor NusB"/>
    <property type="match status" value="1"/>
</dbReference>
<dbReference type="Gene3D" id="1.10.940.10">
    <property type="entry name" value="NusB-like"/>
    <property type="match status" value="1"/>
</dbReference>
<dbReference type="HAMAP" id="MF_00073">
    <property type="entry name" value="NusB"/>
    <property type="match status" value="1"/>
</dbReference>
<dbReference type="InterPro" id="IPR035926">
    <property type="entry name" value="NusB-like_sf"/>
</dbReference>
<dbReference type="InterPro" id="IPR011605">
    <property type="entry name" value="NusB_fam"/>
</dbReference>
<dbReference type="InterPro" id="IPR006027">
    <property type="entry name" value="NusB_RsmB_TIM44"/>
</dbReference>
<dbReference type="NCBIfam" id="TIGR01951">
    <property type="entry name" value="nusB"/>
    <property type="match status" value="1"/>
</dbReference>
<dbReference type="PANTHER" id="PTHR11078:SF3">
    <property type="entry name" value="ANTITERMINATION NUSB DOMAIN-CONTAINING PROTEIN"/>
    <property type="match status" value="1"/>
</dbReference>
<dbReference type="PANTHER" id="PTHR11078">
    <property type="entry name" value="N UTILIZATION SUBSTANCE PROTEIN B-RELATED"/>
    <property type="match status" value="1"/>
</dbReference>
<dbReference type="Pfam" id="PF01029">
    <property type="entry name" value="NusB"/>
    <property type="match status" value="1"/>
</dbReference>
<dbReference type="SUPFAM" id="SSF48013">
    <property type="entry name" value="NusB-like"/>
    <property type="match status" value="1"/>
</dbReference>
<evidence type="ECO:0000255" key="1">
    <source>
        <dbReference type="HAMAP-Rule" id="MF_00073"/>
    </source>
</evidence>
<sequence>MKPAARRRARECAVQALYSWQLSQNDIADVEYQFLAEQDVKDVDVLYFRELLAGVATNTAYLDGLMKPYLSRLLEELGQVEKAVLRIALYELSKRSDVPYKVAINEAIELAKSFGAEDSHKFVNGVLDKAAPVIRPNKK</sequence>
<organism>
    <name type="scientific">Shigella boydii serotype 4 (strain Sb227)</name>
    <dbReference type="NCBI Taxonomy" id="300268"/>
    <lineage>
        <taxon>Bacteria</taxon>
        <taxon>Pseudomonadati</taxon>
        <taxon>Pseudomonadota</taxon>
        <taxon>Gammaproteobacteria</taxon>
        <taxon>Enterobacterales</taxon>
        <taxon>Enterobacteriaceae</taxon>
        <taxon>Shigella</taxon>
    </lineage>
</organism>